<evidence type="ECO:0000255" key="1">
    <source>
        <dbReference type="HAMAP-Rule" id="MF_01320"/>
    </source>
</evidence>
<evidence type="ECO:0000256" key="2">
    <source>
        <dbReference type="SAM" id="MobiDB-lite"/>
    </source>
</evidence>
<evidence type="ECO:0000305" key="3"/>
<gene>
    <name evidence="1" type="primary">rplB</name>
    <name type="ordered locus">BCA_0142</name>
</gene>
<name>RL2_BACC3</name>
<sequence length="276" mass="30253">MGIKKYNPTTNGRRNMTTNDFAEITTDRPEKSLLAPLSKKAGRNNQGKITVRHQGGGHKRQYRIIDFKRNKDGIPGRVATIEYDPNRSANIALINYVDGEKRYILAPKNLEVGMEIMSGAEADIKIGNALPLINIPVGTVVHNIELKPGRGGQLVRSAGTSAQVLGKEGKYVLVRLTSGEVRLVLSACRATVGQVGNESHELIKIGKAGRSRWLGKRPTVRGSVMNPVDHPHGGGEGRSPIGRKSPMSPWGKPTLGFKTRKKNKASDKFIVRRRKK</sequence>
<organism>
    <name type="scientific">Bacillus cereus (strain 03BB102)</name>
    <dbReference type="NCBI Taxonomy" id="572264"/>
    <lineage>
        <taxon>Bacteria</taxon>
        <taxon>Bacillati</taxon>
        <taxon>Bacillota</taxon>
        <taxon>Bacilli</taxon>
        <taxon>Bacillales</taxon>
        <taxon>Bacillaceae</taxon>
        <taxon>Bacillus</taxon>
        <taxon>Bacillus cereus group</taxon>
    </lineage>
</organism>
<proteinExistence type="inferred from homology"/>
<accession>C1ET42</accession>
<feature type="chain" id="PRO_1000165721" description="Large ribosomal subunit protein uL2">
    <location>
        <begin position="1"/>
        <end position="276"/>
    </location>
</feature>
<feature type="region of interest" description="Disordered" evidence="2">
    <location>
        <begin position="1"/>
        <end position="20"/>
    </location>
</feature>
<feature type="region of interest" description="Disordered" evidence="2">
    <location>
        <begin position="219"/>
        <end position="276"/>
    </location>
</feature>
<feature type="compositionally biased region" description="Polar residues" evidence="2">
    <location>
        <begin position="7"/>
        <end position="20"/>
    </location>
</feature>
<reference key="1">
    <citation type="submission" date="2009-02" db="EMBL/GenBank/DDBJ databases">
        <title>Genome sequence of Bacillus cereus 03BB102.</title>
        <authorList>
            <person name="Dodson R.J."/>
            <person name="Jackson P."/>
            <person name="Munk A.C."/>
            <person name="Brettin T."/>
            <person name="Bruce D."/>
            <person name="Detter C."/>
            <person name="Tapia R."/>
            <person name="Han C."/>
            <person name="Sutton G."/>
            <person name="Sims D."/>
        </authorList>
    </citation>
    <scope>NUCLEOTIDE SEQUENCE [LARGE SCALE GENOMIC DNA]</scope>
    <source>
        <strain>03BB102</strain>
    </source>
</reference>
<protein>
    <recommendedName>
        <fullName evidence="1">Large ribosomal subunit protein uL2</fullName>
    </recommendedName>
    <alternativeName>
        <fullName evidence="3">50S ribosomal protein L2</fullName>
    </alternativeName>
</protein>
<dbReference type="EMBL" id="CP001407">
    <property type="protein sequence ID" value="ACO26368.1"/>
    <property type="molecule type" value="Genomic_DNA"/>
</dbReference>
<dbReference type="RefSeq" id="WP_000511580.1">
    <property type="nucleotide sequence ID" value="NZ_CP009318.1"/>
</dbReference>
<dbReference type="SMR" id="C1ET42"/>
<dbReference type="GeneID" id="93010940"/>
<dbReference type="KEGG" id="bcx:BCA_0142"/>
<dbReference type="PATRIC" id="fig|572264.18.peg.177"/>
<dbReference type="Proteomes" id="UP000002210">
    <property type="component" value="Chromosome"/>
</dbReference>
<dbReference type="GO" id="GO:0015934">
    <property type="term" value="C:large ribosomal subunit"/>
    <property type="evidence" value="ECO:0007669"/>
    <property type="project" value="InterPro"/>
</dbReference>
<dbReference type="GO" id="GO:0019843">
    <property type="term" value="F:rRNA binding"/>
    <property type="evidence" value="ECO:0007669"/>
    <property type="project" value="UniProtKB-UniRule"/>
</dbReference>
<dbReference type="GO" id="GO:0003735">
    <property type="term" value="F:structural constituent of ribosome"/>
    <property type="evidence" value="ECO:0007669"/>
    <property type="project" value="InterPro"/>
</dbReference>
<dbReference type="GO" id="GO:0016740">
    <property type="term" value="F:transferase activity"/>
    <property type="evidence" value="ECO:0007669"/>
    <property type="project" value="InterPro"/>
</dbReference>
<dbReference type="GO" id="GO:0002181">
    <property type="term" value="P:cytoplasmic translation"/>
    <property type="evidence" value="ECO:0007669"/>
    <property type="project" value="TreeGrafter"/>
</dbReference>
<dbReference type="FunFam" id="2.30.30.30:FF:000001">
    <property type="entry name" value="50S ribosomal protein L2"/>
    <property type="match status" value="1"/>
</dbReference>
<dbReference type="FunFam" id="2.40.50.140:FF:000003">
    <property type="entry name" value="50S ribosomal protein L2"/>
    <property type="match status" value="1"/>
</dbReference>
<dbReference type="FunFam" id="4.10.950.10:FF:000001">
    <property type="entry name" value="50S ribosomal protein L2"/>
    <property type="match status" value="1"/>
</dbReference>
<dbReference type="Gene3D" id="2.30.30.30">
    <property type="match status" value="1"/>
</dbReference>
<dbReference type="Gene3D" id="2.40.50.140">
    <property type="entry name" value="Nucleic acid-binding proteins"/>
    <property type="match status" value="1"/>
</dbReference>
<dbReference type="Gene3D" id="4.10.950.10">
    <property type="entry name" value="Ribosomal protein L2, domain 3"/>
    <property type="match status" value="1"/>
</dbReference>
<dbReference type="HAMAP" id="MF_01320_B">
    <property type="entry name" value="Ribosomal_uL2_B"/>
    <property type="match status" value="1"/>
</dbReference>
<dbReference type="InterPro" id="IPR012340">
    <property type="entry name" value="NA-bd_OB-fold"/>
</dbReference>
<dbReference type="InterPro" id="IPR014722">
    <property type="entry name" value="Rib_uL2_dom2"/>
</dbReference>
<dbReference type="InterPro" id="IPR002171">
    <property type="entry name" value="Ribosomal_uL2"/>
</dbReference>
<dbReference type="InterPro" id="IPR005880">
    <property type="entry name" value="Ribosomal_uL2_bac/org-type"/>
</dbReference>
<dbReference type="InterPro" id="IPR022669">
    <property type="entry name" value="Ribosomal_uL2_C"/>
</dbReference>
<dbReference type="InterPro" id="IPR022671">
    <property type="entry name" value="Ribosomal_uL2_CS"/>
</dbReference>
<dbReference type="InterPro" id="IPR014726">
    <property type="entry name" value="Ribosomal_uL2_dom3"/>
</dbReference>
<dbReference type="InterPro" id="IPR022666">
    <property type="entry name" value="Ribosomal_uL2_RNA-bd_dom"/>
</dbReference>
<dbReference type="InterPro" id="IPR008991">
    <property type="entry name" value="Translation_prot_SH3-like_sf"/>
</dbReference>
<dbReference type="NCBIfam" id="TIGR01171">
    <property type="entry name" value="rplB_bact"/>
    <property type="match status" value="1"/>
</dbReference>
<dbReference type="PANTHER" id="PTHR13691:SF5">
    <property type="entry name" value="LARGE RIBOSOMAL SUBUNIT PROTEIN UL2M"/>
    <property type="match status" value="1"/>
</dbReference>
<dbReference type="PANTHER" id="PTHR13691">
    <property type="entry name" value="RIBOSOMAL PROTEIN L2"/>
    <property type="match status" value="1"/>
</dbReference>
<dbReference type="Pfam" id="PF00181">
    <property type="entry name" value="Ribosomal_L2"/>
    <property type="match status" value="1"/>
</dbReference>
<dbReference type="Pfam" id="PF03947">
    <property type="entry name" value="Ribosomal_L2_C"/>
    <property type="match status" value="1"/>
</dbReference>
<dbReference type="PIRSF" id="PIRSF002158">
    <property type="entry name" value="Ribosomal_L2"/>
    <property type="match status" value="1"/>
</dbReference>
<dbReference type="SMART" id="SM01383">
    <property type="entry name" value="Ribosomal_L2"/>
    <property type="match status" value="1"/>
</dbReference>
<dbReference type="SMART" id="SM01382">
    <property type="entry name" value="Ribosomal_L2_C"/>
    <property type="match status" value="1"/>
</dbReference>
<dbReference type="SUPFAM" id="SSF50249">
    <property type="entry name" value="Nucleic acid-binding proteins"/>
    <property type="match status" value="1"/>
</dbReference>
<dbReference type="SUPFAM" id="SSF50104">
    <property type="entry name" value="Translation proteins SH3-like domain"/>
    <property type="match status" value="1"/>
</dbReference>
<dbReference type="PROSITE" id="PS00467">
    <property type="entry name" value="RIBOSOMAL_L2"/>
    <property type="match status" value="1"/>
</dbReference>
<comment type="function">
    <text evidence="1">One of the primary rRNA binding proteins. Required for association of the 30S and 50S subunits to form the 70S ribosome, for tRNA binding and peptide bond formation. It has been suggested to have peptidyltransferase activity; this is somewhat controversial. Makes several contacts with the 16S rRNA in the 70S ribosome.</text>
</comment>
<comment type="subunit">
    <text evidence="1">Part of the 50S ribosomal subunit. Forms a bridge to the 30S subunit in the 70S ribosome.</text>
</comment>
<comment type="similarity">
    <text evidence="1">Belongs to the universal ribosomal protein uL2 family.</text>
</comment>
<keyword id="KW-0687">Ribonucleoprotein</keyword>
<keyword id="KW-0689">Ribosomal protein</keyword>
<keyword id="KW-0694">RNA-binding</keyword>
<keyword id="KW-0699">rRNA-binding</keyword>